<organism>
    <name type="scientific">Bacillus cereus (strain ATCC 14579 / DSM 31 / CCUG 7414 / JCM 2152 / NBRC 15305 / NCIMB 9373 / NCTC 2599 / NRRL B-3711)</name>
    <dbReference type="NCBI Taxonomy" id="226900"/>
    <lineage>
        <taxon>Bacteria</taxon>
        <taxon>Bacillati</taxon>
        <taxon>Bacillota</taxon>
        <taxon>Bacilli</taxon>
        <taxon>Bacillales</taxon>
        <taxon>Bacillaceae</taxon>
        <taxon>Bacillus</taxon>
        <taxon>Bacillus cereus group</taxon>
    </lineage>
</organism>
<evidence type="ECO:0000255" key="1">
    <source>
        <dbReference type="HAMAP-Rule" id="MF_00252"/>
    </source>
</evidence>
<protein>
    <recommendedName>
        <fullName evidence="1">Lysine--tRNA ligase</fullName>
        <ecNumber evidence="1">6.1.1.6</ecNumber>
    </recommendedName>
    <alternativeName>
        <fullName evidence="1">Lysyl-tRNA synthetase</fullName>
        <shortName evidence="1">LysRS</shortName>
    </alternativeName>
</protein>
<dbReference type="EC" id="6.1.1.6" evidence="1"/>
<dbReference type="EMBL" id="AE016877">
    <property type="protein sequence ID" value="AAP07180.1"/>
    <property type="molecule type" value="Genomic_DNA"/>
</dbReference>
<dbReference type="RefSeq" id="NP_829979.1">
    <property type="nucleotide sequence ID" value="NC_004722.1"/>
</dbReference>
<dbReference type="RefSeq" id="WP_000369668.1">
    <property type="nucleotide sequence ID" value="NZ_CP138336.1"/>
</dbReference>
<dbReference type="SMR" id="Q81J70"/>
<dbReference type="STRING" id="226900.BC_0084"/>
<dbReference type="MetOSite" id="Q81J70"/>
<dbReference type="KEGG" id="bce:BC0084"/>
<dbReference type="PATRIC" id="fig|226900.8.peg.99"/>
<dbReference type="HOGENOM" id="CLU_008255_6_0_9"/>
<dbReference type="OrthoDB" id="9801152at2"/>
<dbReference type="Proteomes" id="UP000001417">
    <property type="component" value="Chromosome"/>
</dbReference>
<dbReference type="GO" id="GO:0005737">
    <property type="term" value="C:cytoplasm"/>
    <property type="evidence" value="ECO:0000318"/>
    <property type="project" value="GO_Central"/>
</dbReference>
<dbReference type="GO" id="GO:0005829">
    <property type="term" value="C:cytosol"/>
    <property type="evidence" value="ECO:0000318"/>
    <property type="project" value="GO_Central"/>
</dbReference>
<dbReference type="GO" id="GO:0005524">
    <property type="term" value="F:ATP binding"/>
    <property type="evidence" value="ECO:0007669"/>
    <property type="project" value="UniProtKB-UniRule"/>
</dbReference>
<dbReference type="GO" id="GO:0140096">
    <property type="term" value="F:catalytic activity, acting on a protein"/>
    <property type="evidence" value="ECO:0007669"/>
    <property type="project" value="UniProtKB-ARBA"/>
</dbReference>
<dbReference type="GO" id="GO:0004824">
    <property type="term" value="F:lysine-tRNA ligase activity"/>
    <property type="evidence" value="ECO:0000318"/>
    <property type="project" value="GO_Central"/>
</dbReference>
<dbReference type="GO" id="GO:0000287">
    <property type="term" value="F:magnesium ion binding"/>
    <property type="evidence" value="ECO:0007669"/>
    <property type="project" value="UniProtKB-UniRule"/>
</dbReference>
<dbReference type="GO" id="GO:0016740">
    <property type="term" value="F:transferase activity"/>
    <property type="evidence" value="ECO:0007669"/>
    <property type="project" value="UniProtKB-ARBA"/>
</dbReference>
<dbReference type="GO" id="GO:0000049">
    <property type="term" value="F:tRNA binding"/>
    <property type="evidence" value="ECO:0000318"/>
    <property type="project" value="GO_Central"/>
</dbReference>
<dbReference type="GO" id="GO:0006430">
    <property type="term" value="P:lysyl-tRNA aminoacylation"/>
    <property type="evidence" value="ECO:0000318"/>
    <property type="project" value="GO_Central"/>
</dbReference>
<dbReference type="CDD" id="cd00775">
    <property type="entry name" value="LysRS_core"/>
    <property type="match status" value="1"/>
</dbReference>
<dbReference type="CDD" id="cd04322">
    <property type="entry name" value="LysRS_N"/>
    <property type="match status" value="1"/>
</dbReference>
<dbReference type="FunFam" id="2.40.50.140:FF:000024">
    <property type="entry name" value="Lysine--tRNA ligase"/>
    <property type="match status" value="1"/>
</dbReference>
<dbReference type="FunFam" id="3.30.930.10:FF:000001">
    <property type="entry name" value="Lysine--tRNA ligase"/>
    <property type="match status" value="1"/>
</dbReference>
<dbReference type="Gene3D" id="3.30.930.10">
    <property type="entry name" value="Bira Bifunctional Protein, Domain 2"/>
    <property type="match status" value="1"/>
</dbReference>
<dbReference type="Gene3D" id="2.40.50.140">
    <property type="entry name" value="Nucleic acid-binding proteins"/>
    <property type="match status" value="1"/>
</dbReference>
<dbReference type="HAMAP" id="MF_00252">
    <property type="entry name" value="Lys_tRNA_synth_class2"/>
    <property type="match status" value="1"/>
</dbReference>
<dbReference type="InterPro" id="IPR004364">
    <property type="entry name" value="Aa-tRNA-synt_II"/>
</dbReference>
<dbReference type="InterPro" id="IPR006195">
    <property type="entry name" value="aa-tRNA-synth_II"/>
</dbReference>
<dbReference type="InterPro" id="IPR045864">
    <property type="entry name" value="aa-tRNA-synth_II/BPL/LPL"/>
</dbReference>
<dbReference type="InterPro" id="IPR002313">
    <property type="entry name" value="Lys-tRNA-ligase_II"/>
</dbReference>
<dbReference type="InterPro" id="IPR034762">
    <property type="entry name" value="Lys-tRNA-ligase_II_bac/euk"/>
</dbReference>
<dbReference type="InterPro" id="IPR044136">
    <property type="entry name" value="Lys-tRNA-ligase_II_N"/>
</dbReference>
<dbReference type="InterPro" id="IPR018149">
    <property type="entry name" value="Lys-tRNA-synth_II_C"/>
</dbReference>
<dbReference type="InterPro" id="IPR012340">
    <property type="entry name" value="NA-bd_OB-fold"/>
</dbReference>
<dbReference type="InterPro" id="IPR004365">
    <property type="entry name" value="NA-bd_OB_tRNA"/>
</dbReference>
<dbReference type="NCBIfam" id="TIGR00499">
    <property type="entry name" value="lysS_bact"/>
    <property type="match status" value="1"/>
</dbReference>
<dbReference type="NCBIfam" id="NF001756">
    <property type="entry name" value="PRK00484.1"/>
    <property type="match status" value="1"/>
</dbReference>
<dbReference type="PANTHER" id="PTHR42918:SF15">
    <property type="entry name" value="LYSINE--TRNA LIGASE, CHLOROPLASTIC_MITOCHONDRIAL"/>
    <property type="match status" value="1"/>
</dbReference>
<dbReference type="PANTHER" id="PTHR42918">
    <property type="entry name" value="LYSYL-TRNA SYNTHETASE"/>
    <property type="match status" value="1"/>
</dbReference>
<dbReference type="Pfam" id="PF00152">
    <property type="entry name" value="tRNA-synt_2"/>
    <property type="match status" value="1"/>
</dbReference>
<dbReference type="Pfam" id="PF01336">
    <property type="entry name" value="tRNA_anti-codon"/>
    <property type="match status" value="1"/>
</dbReference>
<dbReference type="PIRSF" id="PIRSF039101">
    <property type="entry name" value="LysRS2"/>
    <property type="match status" value="1"/>
</dbReference>
<dbReference type="PRINTS" id="PR00982">
    <property type="entry name" value="TRNASYNTHLYS"/>
</dbReference>
<dbReference type="SUPFAM" id="SSF55681">
    <property type="entry name" value="Class II aaRS and biotin synthetases"/>
    <property type="match status" value="1"/>
</dbReference>
<dbReference type="SUPFAM" id="SSF50249">
    <property type="entry name" value="Nucleic acid-binding proteins"/>
    <property type="match status" value="1"/>
</dbReference>
<dbReference type="PROSITE" id="PS50862">
    <property type="entry name" value="AA_TRNA_LIGASE_II"/>
    <property type="match status" value="1"/>
</dbReference>
<feature type="chain" id="PRO_0000152597" description="Lysine--tRNA ligase">
    <location>
        <begin position="1"/>
        <end position="499"/>
    </location>
</feature>
<feature type="binding site" evidence="1">
    <location>
        <position position="408"/>
    </location>
    <ligand>
        <name>Mg(2+)</name>
        <dbReference type="ChEBI" id="CHEBI:18420"/>
        <label>1</label>
    </ligand>
</feature>
<feature type="binding site" evidence="1">
    <location>
        <position position="415"/>
    </location>
    <ligand>
        <name>Mg(2+)</name>
        <dbReference type="ChEBI" id="CHEBI:18420"/>
        <label>1</label>
    </ligand>
</feature>
<feature type="binding site" evidence="1">
    <location>
        <position position="415"/>
    </location>
    <ligand>
        <name>Mg(2+)</name>
        <dbReference type="ChEBI" id="CHEBI:18420"/>
        <label>2</label>
    </ligand>
</feature>
<comment type="catalytic activity">
    <reaction evidence="1">
        <text>tRNA(Lys) + L-lysine + ATP = L-lysyl-tRNA(Lys) + AMP + diphosphate</text>
        <dbReference type="Rhea" id="RHEA:20792"/>
        <dbReference type="Rhea" id="RHEA-COMP:9696"/>
        <dbReference type="Rhea" id="RHEA-COMP:9697"/>
        <dbReference type="ChEBI" id="CHEBI:30616"/>
        <dbReference type="ChEBI" id="CHEBI:32551"/>
        <dbReference type="ChEBI" id="CHEBI:33019"/>
        <dbReference type="ChEBI" id="CHEBI:78442"/>
        <dbReference type="ChEBI" id="CHEBI:78529"/>
        <dbReference type="ChEBI" id="CHEBI:456215"/>
        <dbReference type="EC" id="6.1.1.6"/>
    </reaction>
</comment>
<comment type="cofactor">
    <cofactor evidence="1">
        <name>Mg(2+)</name>
        <dbReference type="ChEBI" id="CHEBI:18420"/>
    </cofactor>
    <text evidence="1">Binds 3 Mg(2+) ions per subunit.</text>
</comment>
<comment type="subunit">
    <text evidence="1">Homodimer.</text>
</comment>
<comment type="subcellular location">
    <subcellularLocation>
        <location evidence="1">Cytoplasm</location>
    </subcellularLocation>
</comment>
<comment type="similarity">
    <text evidence="1">Belongs to the class-II aminoacyl-tRNA synthetase family.</text>
</comment>
<reference key="1">
    <citation type="journal article" date="2003" name="Nature">
        <title>Genome sequence of Bacillus cereus and comparative analysis with Bacillus anthracis.</title>
        <authorList>
            <person name="Ivanova N."/>
            <person name="Sorokin A."/>
            <person name="Anderson I."/>
            <person name="Galleron N."/>
            <person name="Candelon B."/>
            <person name="Kapatral V."/>
            <person name="Bhattacharyya A."/>
            <person name="Reznik G."/>
            <person name="Mikhailova N."/>
            <person name="Lapidus A."/>
            <person name="Chu L."/>
            <person name="Mazur M."/>
            <person name="Goltsman E."/>
            <person name="Larsen N."/>
            <person name="D'Souza M."/>
            <person name="Walunas T."/>
            <person name="Grechkin Y."/>
            <person name="Pusch G."/>
            <person name="Haselkorn R."/>
            <person name="Fonstein M."/>
            <person name="Ehrlich S.D."/>
            <person name="Overbeek R."/>
            <person name="Kyrpides N.C."/>
        </authorList>
    </citation>
    <scope>NUCLEOTIDE SEQUENCE [LARGE SCALE GENOMIC DNA]</scope>
    <source>
        <strain>ATCC 14579 / DSM 31 / CCUG 7414 / JCM 2152 / NBRC 15305 / NCIMB 9373 / NCTC 2599 / NRRL B-3711</strain>
    </source>
</reference>
<name>SYK_BACCR</name>
<keyword id="KW-0030">Aminoacyl-tRNA synthetase</keyword>
<keyword id="KW-0067">ATP-binding</keyword>
<keyword id="KW-0963">Cytoplasm</keyword>
<keyword id="KW-0436">Ligase</keyword>
<keyword id="KW-0460">Magnesium</keyword>
<keyword id="KW-0479">Metal-binding</keyword>
<keyword id="KW-0547">Nucleotide-binding</keyword>
<keyword id="KW-0648">Protein biosynthesis</keyword>
<keyword id="KW-1185">Reference proteome</keyword>
<sequence>MDNMNHEELNDQLIVRREKLHNLREQGIDPFGKRFERTNSTTDLVSLYGEFSKEELEEKEIAVSIAGRIMTKRGKGKAGFAHVQDLHGQVQIYVRKDAVGDDEYELFKTADLGDLVGIEGKVFKTNVGELSVKATGFTLLTKSLRPLPDKYHGLKDVEQRYRQRYLDLITSMESRETFVTRSKIIREMRRYLDDNGYLEVETPMMHAIAGGASARPFTTHHNALDMELYMRIAIELHLKRLIVGGLEKVYEIGRVFRNEGVSTRHNPEFTMIELYEAYADYKDIMKLTEDMVAHIAKKVLGTTTIQYGDYEINLEPEWTRLHMVDAIKQYSGADFWNPMSVEEARELAKEHNVEIKDTMEVGHIINEFFEQKVEDKLIQPTFIYGHPVEISPLAKKNDEDPRFTDRFELFIVAREHANAFTELNDPIDQKERFEAQLKEREQGNDEAHMMDDDYIEALEYGMPPTGGLGIGIDRLVMLLTNAPSIRDVLLFPAMRHKQD</sequence>
<proteinExistence type="inferred from homology"/>
<gene>
    <name evidence="1" type="primary">lysS</name>
    <name type="ordered locus">BC_0084</name>
</gene>
<accession>Q81J70</accession>